<gene>
    <name evidence="1" type="primary">mdh</name>
    <name type="ordered locus">SARI_04274</name>
</gene>
<keyword id="KW-0520">NAD</keyword>
<keyword id="KW-0560">Oxidoreductase</keyword>
<keyword id="KW-1185">Reference proteome</keyword>
<keyword id="KW-0816">Tricarboxylic acid cycle</keyword>
<sequence>MKVAVLGAAGGIGQALALLLKNQLPSGSELSLYDIAPVTPGVAVDLSHIPTAVKIKGFSGEDATPALEGADVVLISAGVARKPGMDRSDLFNVNAGIVKNLVQQIAKTCPKACVGIITNPVNTTVAIAAEVLKKAGVYDKNKLFGVTTLDIIRSNTFVAELKGKLPTEVEVPVIGGHSGVTILPLLSQIPGVSFTEQEAADLTKRIQNAGTEVVEAKAGGGSATLSMGQAAARFGLSLVRALQGETGVVECAYVEGDGQYARFFSQPLLLGKNGVEERKSIGTLSAFEQRSLEGMLDTLKKDITLGEEFVTK</sequence>
<comment type="function">
    <text evidence="1">Catalyzes the reversible oxidation of malate to oxaloacetate.</text>
</comment>
<comment type="catalytic activity">
    <reaction evidence="1">
        <text>(S)-malate + NAD(+) = oxaloacetate + NADH + H(+)</text>
        <dbReference type="Rhea" id="RHEA:21432"/>
        <dbReference type="ChEBI" id="CHEBI:15378"/>
        <dbReference type="ChEBI" id="CHEBI:15589"/>
        <dbReference type="ChEBI" id="CHEBI:16452"/>
        <dbReference type="ChEBI" id="CHEBI:57540"/>
        <dbReference type="ChEBI" id="CHEBI:57945"/>
        <dbReference type="EC" id="1.1.1.37"/>
    </reaction>
</comment>
<comment type="subunit">
    <text evidence="1">Homodimer.</text>
</comment>
<comment type="similarity">
    <text evidence="1">Belongs to the LDH/MDH superfamily. MDH type 1 family.</text>
</comment>
<protein>
    <recommendedName>
        <fullName evidence="1">Malate dehydrogenase</fullName>
        <ecNumber evidence="1">1.1.1.37</ecNumber>
    </recommendedName>
</protein>
<reference key="1">
    <citation type="submission" date="2007-11" db="EMBL/GenBank/DDBJ databases">
        <authorList>
            <consortium name="The Salmonella enterica serovar Arizonae Genome Sequencing Project"/>
            <person name="McClelland M."/>
            <person name="Sanderson E.K."/>
            <person name="Porwollik S."/>
            <person name="Spieth J."/>
            <person name="Clifton W.S."/>
            <person name="Fulton R."/>
            <person name="Chunyan W."/>
            <person name="Wollam A."/>
            <person name="Shah N."/>
            <person name="Pepin K."/>
            <person name="Bhonagiri V."/>
            <person name="Nash W."/>
            <person name="Johnson M."/>
            <person name="Thiruvilangam P."/>
            <person name="Wilson R."/>
        </authorList>
    </citation>
    <scope>NUCLEOTIDE SEQUENCE [LARGE SCALE GENOMIC DNA]</scope>
    <source>
        <strain>ATCC BAA-731 / CDC346-86 / RSK2980</strain>
    </source>
</reference>
<evidence type="ECO:0000255" key="1">
    <source>
        <dbReference type="HAMAP-Rule" id="MF_01516"/>
    </source>
</evidence>
<feature type="chain" id="PRO_1000087536" description="Malate dehydrogenase">
    <location>
        <begin position="1"/>
        <end position="312"/>
    </location>
</feature>
<feature type="active site" description="Proton acceptor" evidence="1">
    <location>
        <position position="177"/>
    </location>
</feature>
<feature type="binding site" evidence="1">
    <location>
        <begin position="7"/>
        <end position="13"/>
    </location>
    <ligand>
        <name>NAD(+)</name>
        <dbReference type="ChEBI" id="CHEBI:57540"/>
    </ligand>
</feature>
<feature type="binding site" evidence="1">
    <location>
        <position position="34"/>
    </location>
    <ligand>
        <name>NAD(+)</name>
        <dbReference type="ChEBI" id="CHEBI:57540"/>
    </ligand>
</feature>
<feature type="binding site" evidence="1">
    <location>
        <position position="81"/>
    </location>
    <ligand>
        <name>substrate</name>
    </ligand>
</feature>
<feature type="binding site" evidence="1">
    <location>
        <position position="87"/>
    </location>
    <ligand>
        <name>substrate</name>
    </ligand>
</feature>
<feature type="binding site" evidence="1">
    <location>
        <position position="94"/>
    </location>
    <ligand>
        <name>NAD(+)</name>
        <dbReference type="ChEBI" id="CHEBI:57540"/>
    </ligand>
</feature>
<feature type="binding site" evidence="1">
    <location>
        <begin position="117"/>
        <end position="119"/>
    </location>
    <ligand>
        <name>NAD(+)</name>
        <dbReference type="ChEBI" id="CHEBI:57540"/>
    </ligand>
</feature>
<feature type="binding site" evidence="1">
    <location>
        <position position="119"/>
    </location>
    <ligand>
        <name>substrate</name>
    </ligand>
</feature>
<feature type="binding site" evidence="1">
    <location>
        <position position="153"/>
    </location>
    <ligand>
        <name>substrate</name>
    </ligand>
</feature>
<feature type="binding site" evidence="1">
    <location>
        <position position="227"/>
    </location>
    <ligand>
        <name>NAD(+)</name>
        <dbReference type="ChEBI" id="CHEBI:57540"/>
    </ligand>
</feature>
<accession>A9MNX5</accession>
<name>MDH_SALAR</name>
<proteinExistence type="inferred from homology"/>
<organism>
    <name type="scientific">Salmonella arizonae (strain ATCC BAA-731 / CDC346-86 / RSK2980)</name>
    <dbReference type="NCBI Taxonomy" id="41514"/>
    <lineage>
        <taxon>Bacteria</taxon>
        <taxon>Pseudomonadati</taxon>
        <taxon>Pseudomonadota</taxon>
        <taxon>Gammaproteobacteria</taxon>
        <taxon>Enterobacterales</taxon>
        <taxon>Enterobacteriaceae</taxon>
        <taxon>Salmonella</taxon>
    </lineage>
</organism>
<dbReference type="EC" id="1.1.1.37" evidence="1"/>
<dbReference type="EMBL" id="CP000880">
    <property type="protein sequence ID" value="ABX24057.1"/>
    <property type="molecule type" value="Genomic_DNA"/>
</dbReference>
<dbReference type="SMR" id="A9MNX5"/>
<dbReference type="STRING" id="41514.SARI_04274"/>
<dbReference type="KEGG" id="ses:SARI_04274"/>
<dbReference type="HOGENOM" id="CLU_047181_1_0_6"/>
<dbReference type="Proteomes" id="UP000002084">
    <property type="component" value="Chromosome"/>
</dbReference>
<dbReference type="GO" id="GO:0005737">
    <property type="term" value="C:cytoplasm"/>
    <property type="evidence" value="ECO:0007669"/>
    <property type="project" value="TreeGrafter"/>
</dbReference>
<dbReference type="GO" id="GO:0030060">
    <property type="term" value="F:L-malate dehydrogenase (NAD+) activity"/>
    <property type="evidence" value="ECO:0007669"/>
    <property type="project" value="UniProtKB-UniRule"/>
</dbReference>
<dbReference type="GO" id="GO:0006108">
    <property type="term" value="P:malate metabolic process"/>
    <property type="evidence" value="ECO:0007669"/>
    <property type="project" value="InterPro"/>
</dbReference>
<dbReference type="GO" id="GO:0006099">
    <property type="term" value="P:tricarboxylic acid cycle"/>
    <property type="evidence" value="ECO:0007669"/>
    <property type="project" value="UniProtKB-UniRule"/>
</dbReference>
<dbReference type="CDD" id="cd01337">
    <property type="entry name" value="MDH_glyoxysomal_mitochondrial"/>
    <property type="match status" value="1"/>
</dbReference>
<dbReference type="FunFam" id="3.40.50.720:FF:000017">
    <property type="entry name" value="Malate dehydrogenase"/>
    <property type="match status" value="1"/>
</dbReference>
<dbReference type="FunFam" id="3.90.110.10:FF:000001">
    <property type="entry name" value="Malate dehydrogenase"/>
    <property type="match status" value="1"/>
</dbReference>
<dbReference type="Gene3D" id="3.90.110.10">
    <property type="entry name" value="Lactate dehydrogenase/glycoside hydrolase, family 4, C-terminal"/>
    <property type="match status" value="1"/>
</dbReference>
<dbReference type="Gene3D" id="3.40.50.720">
    <property type="entry name" value="NAD(P)-binding Rossmann-like Domain"/>
    <property type="match status" value="1"/>
</dbReference>
<dbReference type="HAMAP" id="MF_01516">
    <property type="entry name" value="Malate_dehydrog_1"/>
    <property type="match status" value="1"/>
</dbReference>
<dbReference type="InterPro" id="IPR001557">
    <property type="entry name" value="L-lactate/malate_DH"/>
</dbReference>
<dbReference type="InterPro" id="IPR022383">
    <property type="entry name" value="Lactate/malate_DH_C"/>
</dbReference>
<dbReference type="InterPro" id="IPR001236">
    <property type="entry name" value="Lactate/malate_DH_N"/>
</dbReference>
<dbReference type="InterPro" id="IPR015955">
    <property type="entry name" value="Lactate_DH/Glyco_Ohase_4_C"/>
</dbReference>
<dbReference type="InterPro" id="IPR001252">
    <property type="entry name" value="Malate_DH_AS"/>
</dbReference>
<dbReference type="InterPro" id="IPR010097">
    <property type="entry name" value="Malate_DH_type1"/>
</dbReference>
<dbReference type="InterPro" id="IPR023958">
    <property type="entry name" value="Malate_DH_type1_bac"/>
</dbReference>
<dbReference type="InterPro" id="IPR036291">
    <property type="entry name" value="NAD(P)-bd_dom_sf"/>
</dbReference>
<dbReference type="NCBIfam" id="TIGR01772">
    <property type="entry name" value="MDH_euk_gproteo"/>
    <property type="match status" value="1"/>
</dbReference>
<dbReference type="PANTHER" id="PTHR11540">
    <property type="entry name" value="MALATE AND LACTATE DEHYDROGENASE"/>
    <property type="match status" value="1"/>
</dbReference>
<dbReference type="PANTHER" id="PTHR11540:SF16">
    <property type="entry name" value="MALATE DEHYDROGENASE, MITOCHONDRIAL"/>
    <property type="match status" value="1"/>
</dbReference>
<dbReference type="Pfam" id="PF02866">
    <property type="entry name" value="Ldh_1_C"/>
    <property type="match status" value="1"/>
</dbReference>
<dbReference type="Pfam" id="PF00056">
    <property type="entry name" value="Ldh_1_N"/>
    <property type="match status" value="1"/>
</dbReference>
<dbReference type="PIRSF" id="PIRSF000102">
    <property type="entry name" value="Lac_mal_DH"/>
    <property type="match status" value="1"/>
</dbReference>
<dbReference type="SUPFAM" id="SSF56327">
    <property type="entry name" value="LDH C-terminal domain-like"/>
    <property type="match status" value="1"/>
</dbReference>
<dbReference type="SUPFAM" id="SSF51735">
    <property type="entry name" value="NAD(P)-binding Rossmann-fold domains"/>
    <property type="match status" value="1"/>
</dbReference>
<dbReference type="PROSITE" id="PS00068">
    <property type="entry name" value="MDH"/>
    <property type="match status" value="1"/>
</dbReference>